<protein>
    <recommendedName>
        <fullName>Putative nickel/cobalt efflux system MJ1092</fullName>
    </recommendedName>
</protein>
<feature type="chain" id="PRO_0000194015" description="Putative nickel/cobalt efflux system MJ1092">
    <location>
        <begin position="1"/>
        <end position="214"/>
    </location>
</feature>
<feature type="transmembrane region" description="Helical" evidence="1">
    <location>
        <begin position="2"/>
        <end position="22"/>
    </location>
</feature>
<feature type="transmembrane region" description="Helical" evidence="1">
    <location>
        <begin position="46"/>
        <end position="66"/>
    </location>
</feature>
<feature type="transmembrane region" description="Helical" evidence="1">
    <location>
        <begin position="79"/>
        <end position="99"/>
    </location>
</feature>
<feature type="transmembrane region" description="Helical" evidence="1">
    <location>
        <begin position="116"/>
        <end position="136"/>
    </location>
</feature>
<feature type="transmembrane region" description="Helical" evidence="1">
    <location>
        <begin position="149"/>
        <end position="169"/>
    </location>
</feature>
<feature type="transmembrane region" description="Helical" evidence="1">
    <location>
        <begin position="188"/>
        <end position="208"/>
    </location>
</feature>
<proteinExistence type="inferred from homology"/>
<sequence length="214" mass="22704">MVMIMELLYAITAFILGMLHALEPGHGKSVVAAYILGTKADLKDAILLGTTITISHTAVIFLLGILSIYLLESLNVDVVHDMMSVVGGLILIAVGIWIIRSYLHPHEHKVDTKKGVITLGLSAGLVPCPAALAVLLLSISSGNLIDGLIYVAIFSIGLAISLTGLAVAFVESKELIKKYVGNRKVSKLPLISGSIIILIGLYTIAHPILEHAIV</sequence>
<organism>
    <name type="scientific">Methanocaldococcus jannaschii (strain ATCC 43067 / DSM 2661 / JAL-1 / JCM 10045 / NBRC 100440)</name>
    <name type="common">Methanococcus jannaschii</name>
    <dbReference type="NCBI Taxonomy" id="243232"/>
    <lineage>
        <taxon>Archaea</taxon>
        <taxon>Methanobacteriati</taxon>
        <taxon>Methanobacteriota</taxon>
        <taxon>Methanomada group</taxon>
        <taxon>Methanococci</taxon>
        <taxon>Methanococcales</taxon>
        <taxon>Methanocaldococcaceae</taxon>
        <taxon>Methanocaldococcus</taxon>
    </lineage>
</organism>
<name>Y1092_METJA</name>
<gene>
    <name type="ordered locus">MJ1092</name>
</gene>
<comment type="function">
    <text evidence="2">Efflux system for nickel and cobalt.</text>
</comment>
<comment type="subcellular location">
    <subcellularLocation>
        <location evidence="2">Cell membrane</location>
        <topology evidence="2">Multi-pass membrane protein</topology>
    </subcellularLocation>
</comment>
<comment type="similarity">
    <text evidence="2">Belongs to the NiCoT transporter (TC 2.A.52) family.</text>
</comment>
<evidence type="ECO:0000255" key="1"/>
<evidence type="ECO:0000305" key="2"/>
<reference key="1">
    <citation type="journal article" date="1996" name="Science">
        <title>Complete genome sequence of the methanogenic archaeon, Methanococcus jannaschii.</title>
        <authorList>
            <person name="Bult C.J."/>
            <person name="White O."/>
            <person name="Olsen G.J."/>
            <person name="Zhou L."/>
            <person name="Fleischmann R.D."/>
            <person name="Sutton G.G."/>
            <person name="Blake J.A."/>
            <person name="FitzGerald L.M."/>
            <person name="Clayton R.A."/>
            <person name="Gocayne J.D."/>
            <person name="Kerlavage A.R."/>
            <person name="Dougherty B.A."/>
            <person name="Tomb J.-F."/>
            <person name="Adams M.D."/>
            <person name="Reich C.I."/>
            <person name="Overbeek R."/>
            <person name="Kirkness E.F."/>
            <person name="Weinstock K.G."/>
            <person name="Merrick J.M."/>
            <person name="Glodek A."/>
            <person name="Scott J.L."/>
            <person name="Geoghagen N.S.M."/>
            <person name="Weidman J.F."/>
            <person name="Fuhrmann J.L."/>
            <person name="Nguyen D."/>
            <person name="Utterback T.R."/>
            <person name="Kelley J.M."/>
            <person name="Peterson J.D."/>
            <person name="Sadow P.W."/>
            <person name="Hanna M.C."/>
            <person name="Cotton M.D."/>
            <person name="Roberts K.M."/>
            <person name="Hurst M.A."/>
            <person name="Kaine B.P."/>
            <person name="Borodovsky M."/>
            <person name="Klenk H.-P."/>
            <person name="Fraser C.M."/>
            <person name="Smith H.O."/>
            <person name="Woese C.R."/>
            <person name="Venter J.C."/>
        </authorList>
    </citation>
    <scope>NUCLEOTIDE SEQUENCE [LARGE SCALE GENOMIC DNA]</scope>
    <source>
        <strain>ATCC 43067 / DSM 2661 / JAL-1 / JCM 10045 / NBRC 100440</strain>
    </source>
</reference>
<keyword id="KW-1003">Cell membrane</keyword>
<keyword id="KW-0170">Cobalt</keyword>
<keyword id="KW-0171">Cobalt transport</keyword>
<keyword id="KW-0406">Ion transport</keyword>
<keyword id="KW-0472">Membrane</keyword>
<keyword id="KW-0533">Nickel</keyword>
<keyword id="KW-0921">Nickel transport</keyword>
<keyword id="KW-1185">Reference proteome</keyword>
<keyword id="KW-0812">Transmembrane</keyword>
<keyword id="KW-1133">Transmembrane helix</keyword>
<keyword id="KW-0813">Transport</keyword>
<accession>Q58492</accession>
<dbReference type="EMBL" id="L77117">
    <property type="protein sequence ID" value="AAB99093.1"/>
    <property type="molecule type" value="Genomic_DNA"/>
</dbReference>
<dbReference type="PIR" id="C64436">
    <property type="entry name" value="C64436"/>
</dbReference>
<dbReference type="RefSeq" id="WP_010870604.1">
    <property type="nucleotide sequence ID" value="NC_000909.1"/>
</dbReference>
<dbReference type="STRING" id="243232.MJ_1092"/>
<dbReference type="TCDB" id="2.A.113.1.4">
    <property type="family name" value="the nickel/cobalt transporter (nico) family"/>
</dbReference>
<dbReference type="PaxDb" id="243232-MJ_1092"/>
<dbReference type="EnsemblBacteria" id="AAB99093">
    <property type="protein sequence ID" value="AAB99093"/>
    <property type="gene ID" value="MJ_1092"/>
</dbReference>
<dbReference type="GeneID" id="1451988"/>
<dbReference type="KEGG" id="mja:MJ_1092"/>
<dbReference type="eggNOG" id="arCOG03918">
    <property type="taxonomic scope" value="Archaea"/>
</dbReference>
<dbReference type="HOGENOM" id="CLU_058605_4_1_2"/>
<dbReference type="InParanoid" id="Q58492"/>
<dbReference type="OrthoDB" id="71082at2157"/>
<dbReference type="Proteomes" id="UP000000805">
    <property type="component" value="Chromosome"/>
</dbReference>
<dbReference type="GO" id="GO:0005886">
    <property type="term" value="C:plasma membrane"/>
    <property type="evidence" value="ECO:0000318"/>
    <property type="project" value="GO_Central"/>
</dbReference>
<dbReference type="GO" id="GO:0015099">
    <property type="term" value="F:nickel cation transmembrane transporter activity"/>
    <property type="evidence" value="ECO:0000318"/>
    <property type="project" value="GO_Central"/>
</dbReference>
<dbReference type="GO" id="GO:0006824">
    <property type="term" value="P:cobalt ion transport"/>
    <property type="evidence" value="ECO:0007669"/>
    <property type="project" value="UniProtKB-KW"/>
</dbReference>
<dbReference type="GO" id="GO:0032025">
    <property type="term" value="P:response to cobalt ion"/>
    <property type="evidence" value="ECO:0000318"/>
    <property type="project" value="GO_Central"/>
</dbReference>
<dbReference type="GO" id="GO:0010045">
    <property type="term" value="P:response to nickel cation"/>
    <property type="evidence" value="ECO:0000318"/>
    <property type="project" value="GO_Central"/>
</dbReference>
<dbReference type="InterPro" id="IPR051224">
    <property type="entry name" value="NiCoT_RcnA"/>
</dbReference>
<dbReference type="InterPro" id="IPR039447">
    <property type="entry name" value="UreH-like_TM_dom"/>
</dbReference>
<dbReference type="PANTHER" id="PTHR40659">
    <property type="entry name" value="NICKEL/COBALT EFFLUX SYSTEM RCNA"/>
    <property type="match status" value="1"/>
</dbReference>
<dbReference type="PANTHER" id="PTHR40659:SF1">
    <property type="entry name" value="NICKEL_COBALT EFFLUX SYSTEM RCNA"/>
    <property type="match status" value="1"/>
</dbReference>
<dbReference type="Pfam" id="PF13386">
    <property type="entry name" value="DsbD_2"/>
    <property type="match status" value="1"/>
</dbReference>